<organism>
    <name type="scientific">Syntrophus aciditrophicus (strain SB)</name>
    <dbReference type="NCBI Taxonomy" id="56780"/>
    <lineage>
        <taxon>Bacteria</taxon>
        <taxon>Pseudomonadati</taxon>
        <taxon>Thermodesulfobacteriota</taxon>
        <taxon>Syntrophia</taxon>
        <taxon>Syntrophales</taxon>
        <taxon>Syntrophaceae</taxon>
        <taxon>Syntrophus</taxon>
    </lineage>
</organism>
<protein>
    <recommendedName>
        <fullName evidence="1">Phosphopantetheine adenylyltransferase</fullName>
        <ecNumber evidence="1">2.7.7.3</ecNumber>
    </recommendedName>
    <alternativeName>
        <fullName evidence="1">Dephospho-CoA pyrophosphorylase</fullName>
    </alternativeName>
    <alternativeName>
        <fullName evidence="1">Pantetheine-phosphate adenylyltransferase</fullName>
        <shortName evidence="1">PPAT</shortName>
    </alternativeName>
</protein>
<proteinExistence type="inferred from homology"/>
<dbReference type="EC" id="2.7.7.3" evidence="1"/>
<dbReference type="EMBL" id="CP000252">
    <property type="protein sequence ID" value="ABC77477.1"/>
    <property type="molecule type" value="Genomic_DNA"/>
</dbReference>
<dbReference type="RefSeq" id="WP_011417499.1">
    <property type="nucleotide sequence ID" value="NC_007759.1"/>
</dbReference>
<dbReference type="SMR" id="Q2LTS1"/>
<dbReference type="FunCoup" id="Q2LTS1">
    <property type="interactions" value="410"/>
</dbReference>
<dbReference type="STRING" id="56780.SYN_00909"/>
<dbReference type="KEGG" id="sat:SYN_00909"/>
<dbReference type="eggNOG" id="COG0669">
    <property type="taxonomic scope" value="Bacteria"/>
</dbReference>
<dbReference type="HOGENOM" id="CLU_100149_0_1_7"/>
<dbReference type="InParanoid" id="Q2LTS1"/>
<dbReference type="OrthoDB" id="9806661at2"/>
<dbReference type="UniPathway" id="UPA00241">
    <property type="reaction ID" value="UER00355"/>
</dbReference>
<dbReference type="Proteomes" id="UP000001933">
    <property type="component" value="Chromosome"/>
</dbReference>
<dbReference type="GO" id="GO:0005737">
    <property type="term" value="C:cytoplasm"/>
    <property type="evidence" value="ECO:0007669"/>
    <property type="project" value="UniProtKB-SubCell"/>
</dbReference>
<dbReference type="GO" id="GO:0005524">
    <property type="term" value="F:ATP binding"/>
    <property type="evidence" value="ECO:0007669"/>
    <property type="project" value="UniProtKB-KW"/>
</dbReference>
<dbReference type="GO" id="GO:0004595">
    <property type="term" value="F:pantetheine-phosphate adenylyltransferase activity"/>
    <property type="evidence" value="ECO:0007669"/>
    <property type="project" value="UniProtKB-UniRule"/>
</dbReference>
<dbReference type="GO" id="GO:0015937">
    <property type="term" value="P:coenzyme A biosynthetic process"/>
    <property type="evidence" value="ECO:0007669"/>
    <property type="project" value="UniProtKB-UniRule"/>
</dbReference>
<dbReference type="CDD" id="cd02163">
    <property type="entry name" value="PPAT"/>
    <property type="match status" value="1"/>
</dbReference>
<dbReference type="Gene3D" id="3.40.50.620">
    <property type="entry name" value="HUPs"/>
    <property type="match status" value="1"/>
</dbReference>
<dbReference type="HAMAP" id="MF_00151">
    <property type="entry name" value="PPAT_bact"/>
    <property type="match status" value="1"/>
</dbReference>
<dbReference type="InterPro" id="IPR004821">
    <property type="entry name" value="Cyt_trans-like"/>
</dbReference>
<dbReference type="InterPro" id="IPR001980">
    <property type="entry name" value="PPAT"/>
</dbReference>
<dbReference type="InterPro" id="IPR014729">
    <property type="entry name" value="Rossmann-like_a/b/a_fold"/>
</dbReference>
<dbReference type="NCBIfam" id="TIGR01510">
    <property type="entry name" value="coaD_prev_kdtB"/>
    <property type="match status" value="1"/>
</dbReference>
<dbReference type="NCBIfam" id="TIGR00125">
    <property type="entry name" value="cyt_tran_rel"/>
    <property type="match status" value="1"/>
</dbReference>
<dbReference type="PANTHER" id="PTHR21342">
    <property type="entry name" value="PHOSPHOPANTETHEINE ADENYLYLTRANSFERASE"/>
    <property type="match status" value="1"/>
</dbReference>
<dbReference type="PANTHER" id="PTHR21342:SF1">
    <property type="entry name" value="PHOSPHOPANTETHEINE ADENYLYLTRANSFERASE"/>
    <property type="match status" value="1"/>
</dbReference>
<dbReference type="Pfam" id="PF01467">
    <property type="entry name" value="CTP_transf_like"/>
    <property type="match status" value="1"/>
</dbReference>
<dbReference type="PRINTS" id="PR01020">
    <property type="entry name" value="LPSBIOSNTHSS"/>
</dbReference>
<dbReference type="SUPFAM" id="SSF52374">
    <property type="entry name" value="Nucleotidylyl transferase"/>
    <property type="match status" value="1"/>
</dbReference>
<sequence>MKKIAVYPGSFDPITNGHLDIIKRGLSMFDELIVLIAYNAAKSSLFTVQERIEMIQEALHDRKGVRVDSYDGLLVDYVRKEGGNVILRGLRAMSEFEYEFQLALMNRRLNRNIETVFLMTGYKWFYTSSTIIKEASRLGGSPKGLVPEVVFRKMQEKYPLMNKGK</sequence>
<comment type="function">
    <text evidence="1">Reversibly transfers an adenylyl group from ATP to 4'-phosphopantetheine, yielding dephospho-CoA (dPCoA) and pyrophosphate.</text>
</comment>
<comment type="catalytic activity">
    <reaction evidence="1">
        <text>(R)-4'-phosphopantetheine + ATP + H(+) = 3'-dephospho-CoA + diphosphate</text>
        <dbReference type="Rhea" id="RHEA:19801"/>
        <dbReference type="ChEBI" id="CHEBI:15378"/>
        <dbReference type="ChEBI" id="CHEBI:30616"/>
        <dbReference type="ChEBI" id="CHEBI:33019"/>
        <dbReference type="ChEBI" id="CHEBI:57328"/>
        <dbReference type="ChEBI" id="CHEBI:61723"/>
        <dbReference type="EC" id="2.7.7.3"/>
    </reaction>
</comment>
<comment type="cofactor">
    <cofactor evidence="1">
        <name>Mg(2+)</name>
        <dbReference type="ChEBI" id="CHEBI:18420"/>
    </cofactor>
</comment>
<comment type="pathway">
    <text evidence="1">Cofactor biosynthesis; coenzyme A biosynthesis; CoA from (R)-pantothenate: step 4/5.</text>
</comment>
<comment type="subunit">
    <text evidence="1">Homohexamer.</text>
</comment>
<comment type="subcellular location">
    <subcellularLocation>
        <location evidence="1">Cytoplasm</location>
    </subcellularLocation>
</comment>
<comment type="similarity">
    <text evidence="1">Belongs to the bacterial CoaD family.</text>
</comment>
<accession>Q2LTS1</accession>
<name>COAD_SYNAS</name>
<evidence type="ECO:0000255" key="1">
    <source>
        <dbReference type="HAMAP-Rule" id="MF_00151"/>
    </source>
</evidence>
<feature type="chain" id="PRO_1000096850" description="Phosphopantetheine adenylyltransferase">
    <location>
        <begin position="1"/>
        <end position="165"/>
    </location>
</feature>
<feature type="binding site" evidence="1">
    <location>
        <begin position="10"/>
        <end position="11"/>
    </location>
    <ligand>
        <name>ATP</name>
        <dbReference type="ChEBI" id="CHEBI:30616"/>
    </ligand>
</feature>
<feature type="binding site" evidence="1">
    <location>
        <position position="10"/>
    </location>
    <ligand>
        <name>substrate</name>
    </ligand>
</feature>
<feature type="binding site" evidence="1">
    <location>
        <position position="18"/>
    </location>
    <ligand>
        <name>ATP</name>
        <dbReference type="ChEBI" id="CHEBI:30616"/>
    </ligand>
</feature>
<feature type="binding site" evidence="1">
    <location>
        <position position="42"/>
    </location>
    <ligand>
        <name>substrate</name>
    </ligand>
</feature>
<feature type="binding site" evidence="1">
    <location>
        <position position="74"/>
    </location>
    <ligand>
        <name>substrate</name>
    </ligand>
</feature>
<feature type="binding site" evidence="1">
    <location>
        <position position="88"/>
    </location>
    <ligand>
        <name>substrate</name>
    </ligand>
</feature>
<feature type="binding site" evidence="1">
    <location>
        <begin position="89"/>
        <end position="91"/>
    </location>
    <ligand>
        <name>ATP</name>
        <dbReference type="ChEBI" id="CHEBI:30616"/>
    </ligand>
</feature>
<feature type="binding site" evidence="1">
    <location>
        <position position="99"/>
    </location>
    <ligand>
        <name>ATP</name>
        <dbReference type="ChEBI" id="CHEBI:30616"/>
    </ligand>
</feature>
<feature type="binding site" evidence="1">
    <location>
        <begin position="124"/>
        <end position="130"/>
    </location>
    <ligand>
        <name>ATP</name>
        <dbReference type="ChEBI" id="CHEBI:30616"/>
    </ligand>
</feature>
<feature type="site" description="Transition state stabilizer" evidence="1">
    <location>
        <position position="18"/>
    </location>
</feature>
<keyword id="KW-0067">ATP-binding</keyword>
<keyword id="KW-0173">Coenzyme A biosynthesis</keyword>
<keyword id="KW-0963">Cytoplasm</keyword>
<keyword id="KW-0460">Magnesium</keyword>
<keyword id="KW-0547">Nucleotide-binding</keyword>
<keyword id="KW-0548">Nucleotidyltransferase</keyword>
<keyword id="KW-1185">Reference proteome</keyword>
<keyword id="KW-0808">Transferase</keyword>
<reference key="1">
    <citation type="journal article" date="2007" name="Proc. Natl. Acad. Sci. U.S.A.">
        <title>The genome of Syntrophus aciditrophicus: life at the thermodynamic limit of microbial growth.</title>
        <authorList>
            <person name="McInerney M.J."/>
            <person name="Rohlin L."/>
            <person name="Mouttaki H."/>
            <person name="Kim U."/>
            <person name="Krupp R.S."/>
            <person name="Rios-Hernandez L."/>
            <person name="Sieber J."/>
            <person name="Struchtemeyer C.G."/>
            <person name="Bhattacharyya A."/>
            <person name="Campbell J.W."/>
            <person name="Gunsalus R.P."/>
        </authorList>
    </citation>
    <scope>NUCLEOTIDE SEQUENCE [LARGE SCALE GENOMIC DNA]</scope>
    <source>
        <strain>SB</strain>
    </source>
</reference>
<gene>
    <name evidence="1" type="primary">coaD</name>
    <name type="ordered locus">SYNAS_15980</name>
    <name type="ORF">SYN_00909</name>
</gene>